<evidence type="ECO:0000255" key="1">
    <source>
        <dbReference type="PROSITE-ProRule" id="PRU00393"/>
    </source>
</evidence>
<evidence type="ECO:0000255" key="2">
    <source>
        <dbReference type="PROSITE-ProRule" id="PRU00394"/>
    </source>
</evidence>
<evidence type="ECO:0000256" key="3">
    <source>
        <dbReference type="SAM" id="MobiDB-lite"/>
    </source>
</evidence>
<evidence type="ECO:0000269" key="4">
    <source>
    </source>
</evidence>
<evidence type="ECO:0000303" key="5">
    <source>
    </source>
</evidence>
<evidence type="ECO:0000305" key="6">
    <source>
    </source>
</evidence>
<evidence type="ECO:0000312" key="7">
    <source>
        <dbReference type="EMBL" id="ABL71988.1"/>
    </source>
</evidence>
<name>BHCR_PARDP</name>
<dbReference type="EMBL" id="CP000490">
    <property type="protein sequence ID" value="ABL71988.1"/>
    <property type="molecule type" value="Genomic_DNA"/>
</dbReference>
<dbReference type="RefSeq" id="WP_011750155.1">
    <property type="nucleotide sequence ID" value="NC_008687.1"/>
</dbReference>
<dbReference type="SMR" id="A1B8Z4"/>
<dbReference type="STRING" id="318586.Pden_3922"/>
<dbReference type="EnsemblBacteria" id="ABL71988">
    <property type="protein sequence ID" value="ABL71988"/>
    <property type="gene ID" value="Pden_3922"/>
</dbReference>
<dbReference type="GeneID" id="93453582"/>
<dbReference type="KEGG" id="pde:Pden_3922"/>
<dbReference type="eggNOG" id="COG1414">
    <property type="taxonomic scope" value="Bacteria"/>
</dbReference>
<dbReference type="HOGENOM" id="CLU_062618_5_5_5"/>
<dbReference type="OrthoDB" id="9807558at2"/>
<dbReference type="Proteomes" id="UP000000361">
    <property type="component" value="Chromosome 2"/>
</dbReference>
<dbReference type="GO" id="GO:0003677">
    <property type="term" value="F:DNA binding"/>
    <property type="evidence" value="ECO:0000314"/>
    <property type="project" value="UniProtKB"/>
</dbReference>
<dbReference type="GO" id="GO:0003700">
    <property type="term" value="F:DNA-binding transcription factor activity"/>
    <property type="evidence" value="ECO:0007669"/>
    <property type="project" value="TreeGrafter"/>
</dbReference>
<dbReference type="GO" id="GO:0045892">
    <property type="term" value="P:negative regulation of DNA-templated transcription"/>
    <property type="evidence" value="ECO:0007669"/>
    <property type="project" value="TreeGrafter"/>
</dbReference>
<dbReference type="GO" id="GO:0006355">
    <property type="term" value="P:regulation of DNA-templated transcription"/>
    <property type="evidence" value="ECO:0000314"/>
    <property type="project" value="UniProtKB"/>
</dbReference>
<dbReference type="Gene3D" id="3.30.450.40">
    <property type="match status" value="1"/>
</dbReference>
<dbReference type="Gene3D" id="1.10.10.10">
    <property type="entry name" value="Winged helix-like DNA-binding domain superfamily/Winged helix DNA-binding domain"/>
    <property type="match status" value="1"/>
</dbReference>
<dbReference type="InterPro" id="IPR029016">
    <property type="entry name" value="GAF-like_dom_sf"/>
</dbReference>
<dbReference type="InterPro" id="IPR050707">
    <property type="entry name" value="HTH_MetabolicPath_Reg"/>
</dbReference>
<dbReference type="InterPro" id="IPR054844">
    <property type="entry name" value="TransRegBhcR"/>
</dbReference>
<dbReference type="InterPro" id="IPR014757">
    <property type="entry name" value="Tscrpt_reg_IclR_C"/>
</dbReference>
<dbReference type="InterPro" id="IPR005471">
    <property type="entry name" value="Tscrpt_reg_IclR_N"/>
</dbReference>
<dbReference type="InterPro" id="IPR036388">
    <property type="entry name" value="WH-like_DNA-bd_sf"/>
</dbReference>
<dbReference type="InterPro" id="IPR036390">
    <property type="entry name" value="WH_DNA-bd_sf"/>
</dbReference>
<dbReference type="NCBIfam" id="NF045644">
    <property type="entry name" value="TransRegBhcR"/>
    <property type="match status" value="1"/>
</dbReference>
<dbReference type="PANTHER" id="PTHR30136">
    <property type="entry name" value="HELIX-TURN-HELIX TRANSCRIPTIONAL REGULATOR, ICLR FAMILY"/>
    <property type="match status" value="1"/>
</dbReference>
<dbReference type="PANTHER" id="PTHR30136:SF24">
    <property type="entry name" value="HTH-TYPE TRANSCRIPTIONAL REPRESSOR ALLR"/>
    <property type="match status" value="1"/>
</dbReference>
<dbReference type="Pfam" id="PF09339">
    <property type="entry name" value="HTH_IclR"/>
    <property type="match status" value="1"/>
</dbReference>
<dbReference type="Pfam" id="PF01614">
    <property type="entry name" value="IclR_C"/>
    <property type="match status" value="1"/>
</dbReference>
<dbReference type="SMART" id="SM00346">
    <property type="entry name" value="HTH_ICLR"/>
    <property type="match status" value="1"/>
</dbReference>
<dbReference type="SUPFAM" id="SSF55781">
    <property type="entry name" value="GAF domain-like"/>
    <property type="match status" value="1"/>
</dbReference>
<dbReference type="SUPFAM" id="SSF46785">
    <property type="entry name" value="Winged helix' DNA-binding domain"/>
    <property type="match status" value="1"/>
</dbReference>
<dbReference type="PROSITE" id="PS51077">
    <property type="entry name" value="HTH_ICLR"/>
    <property type="match status" value="1"/>
</dbReference>
<dbReference type="PROSITE" id="PS51078">
    <property type="entry name" value="ICLR_ED"/>
    <property type="match status" value="1"/>
</dbReference>
<reference key="1">
    <citation type="submission" date="2006-12" db="EMBL/GenBank/DDBJ databases">
        <title>Complete sequence of chromosome 2 of Paracoccus denitrificans PD1222.</title>
        <authorList>
            <person name="Copeland A."/>
            <person name="Lucas S."/>
            <person name="Lapidus A."/>
            <person name="Barry K."/>
            <person name="Detter J.C."/>
            <person name="Glavina del Rio T."/>
            <person name="Hammon N."/>
            <person name="Israni S."/>
            <person name="Dalin E."/>
            <person name="Tice H."/>
            <person name="Pitluck S."/>
            <person name="Munk A.C."/>
            <person name="Brettin T."/>
            <person name="Bruce D."/>
            <person name="Han C."/>
            <person name="Tapia R."/>
            <person name="Gilna P."/>
            <person name="Schmutz J."/>
            <person name="Larimer F."/>
            <person name="Land M."/>
            <person name="Hauser L."/>
            <person name="Kyrpides N."/>
            <person name="Lykidis A."/>
            <person name="Spiro S."/>
            <person name="Richardson D.J."/>
            <person name="Moir J.W.B."/>
            <person name="Ferguson S.J."/>
            <person name="van Spanning R.J.M."/>
            <person name="Richardson P."/>
        </authorList>
    </citation>
    <scope>NUCLEOTIDE SEQUENCE [LARGE SCALE GENOMIC DNA]</scope>
    <source>
        <strain>Pd 1222</strain>
    </source>
</reference>
<reference key="2">
    <citation type="journal article" date="2019" name="Nature">
        <title>Marine Proteobacteria metabolize glycolate via the beta-hydroxyaspartate cycle.</title>
        <authorList>
            <person name="Schada von Borzyskowski L."/>
            <person name="Severi F."/>
            <person name="Krueger K."/>
            <person name="Hermann L."/>
            <person name="Gilardet A."/>
            <person name="Sippel F."/>
            <person name="Pommerenke B."/>
            <person name="Claus P."/>
            <person name="Cortina N.S."/>
            <person name="Glatter T."/>
            <person name="Zauner S."/>
            <person name="Zarzycki J."/>
            <person name="Fuchs B.M."/>
            <person name="Bremer E."/>
            <person name="Maier U.G."/>
            <person name="Amann R.I."/>
            <person name="Erb T.J."/>
        </authorList>
    </citation>
    <scope>FUNCTION</scope>
    <scope>DNA BINDING</scope>
    <source>
        <strain>ATCC 17741 / DSM 413 / NBRC 16712 / NCCB 22021 / NCIMB 11627</strain>
    </source>
</reference>
<proteinExistence type="evidence at protein level"/>
<organism>
    <name type="scientific">Paracoccus denitrificans (strain Pd 1222)</name>
    <dbReference type="NCBI Taxonomy" id="318586"/>
    <lineage>
        <taxon>Bacteria</taxon>
        <taxon>Pseudomonadati</taxon>
        <taxon>Pseudomonadota</taxon>
        <taxon>Alphaproteobacteria</taxon>
        <taxon>Rhodobacterales</taxon>
        <taxon>Paracoccaceae</taxon>
        <taxon>Paracoccus</taxon>
    </lineage>
</organism>
<comment type="function">
    <text evidence="4">Transcriptional regulator of the bhc gene cluster involved in glycolate and glyoxylate assimilation via the beta-hydroxyaspartate cycle (BHAC). Glyoxylate negatively affects the interaction of BhcR with the promoter region of the bhc gene cluster.</text>
</comment>
<comment type="miscellaneous">
    <text evidence="6">The beta-hydroxyaspartate cycle (BHAC) consists of BhcA, BhcB, BhcC, and BhcD enzyme activities. Overall, it converts two molecules of glyoxylate (C2) into oxaloacetate (C4) without the loss of carbon as CO2, under consumption of just one reducing equivalent and regeneration of the catalytic amino donor, which makes it one of the most efficient glyoxylate assimilation pathways. This cycle is of ecological importance in the assimilation of phytoplankton-derived dissolved organic carbon in marine environments by marine Proteobacteria, and suggests a trophic interaction between autotrophic phytoplankton and heterotrophic bacterioplankton. Oxaloacetate formed in the BHAC can directly enter the tricarboxylic acid cycle or serve as substrate for anabolic reactions.</text>
</comment>
<feature type="chain" id="PRO_0000449104" description="HTH-type transcriptional regulator BhcR">
    <location>
        <begin position="1"/>
        <end position="279"/>
    </location>
</feature>
<feature type="domain" description="HTH iclR-type" evidence="1">
    <location>
        <begin position="26"/>
        <end position="87"/>
    </location>
</feature>
<feature type="domain" description="IclR-ED" evidence="2">
    <location>
        <begin position="102"/>
        <end position="271"/>
    </location>
</feature>
<feature type="DNA-binding region" description="H-T-H motif" evidence="1">
    <location>
        <begin position="47"/>
        <end position="66"/>
    </location>
</feature>
<feature type="region of interest" description="Disordered" evidence="3">
    <location>
        <begin position="1"/>
        <end position="21"/>
    </location>
</feature>
<feature type="compositionally biased region" description="Basic residues" evidence="3">
    <location>
        <begin position="1"/>
        <end position="13"/>
    </location>
</feature>
<accession>A1B8Z4</accession>
<sequence>MSVQIRKRGRPRGRAGGLGAEDSGGIRALDRALDILDLIAVSSGLTLTEIAQRLDMAPSTVHRVLVTLAARGVAESDSQTQAWHVGPTAFRHGSAFMRRSGLVERARPLLRRLMEVTGETANLGILNGDAVLFLSQAETHETIRAFFPPGTRSALHASGIGKALLAHARPLDLKRMLREMRLERFTDMTLTDPAALVEDLVQIRARGYALDNEERTPGMRCIAAPIFDLAGEAAAGISVSGPTLRMSDARLSAMSDAVIEAARELSFGMAPRKDAGERA</sequence>
<protein>
    <recommendedName>
        <fullName evidence="6">HTH-type transcriptional regulator BhcR</fullName>
    </recommendedName>
    <alternativeName>
        <fullName evidence="6">Bhc regulatory protein</fullName>
    </alternativeName>
</protein>
<keyword id="KW-0238">DNA-binding</keyword>
<keyword id="KW-1185">Reference proteome</keyword>
<keyword id="KW-0678">Repressor</keyword>
<keyword id="KW-0804">Transcription</keyword>
<keyword id="KW-0805">Transcription regulation</keyword>
<gene>
    <name evidence="5" type="primary">bhcR</name>
    <name evidence="7" type="ordered locus">Pden_3922</name>
</gene>